<feature type="signal peptide" evidence="7">
    <location>
        <begin position="1"/>
        <end position="27"/>
    </location>
</feature>
<feature type="chain" id="PRO_0000011584" description="Glutamate receptor ionotropic, NMDA 2D">
    <location>
        <begin position="28"/>
        <end position="1323"/>
    </location>
</feature>
<feature type="topological domain" description="Extracellular" evidence="2">
    <location>
        <begin position="28"/>
        <end position="579"/>
    </location>
</feature>
<feature type="transmembrane region" description="Helical" evidence="2">
    <location>
        <begin position="580"/>
        <end position="601"/>
    </location>
</feature>
<feature type="topological domain" description="Cytoplasmic" evidence="2">
    <location>
        <begin position="602"/>
        <end position="626"/>
    </location>
</feature>
<feature type="intramembrane region" description="Discontinuously helical" evidence="2">
    <location>
        <begin position="627"/>
        <end position="638"/>
    </location>
</feature>
<feature type="topological domain" description="Cytoplasmic" evidence="2">
    <location>
        <begin position="639"/>
        <end position="650"/>
    </location>
</feature>
<feature type="transmembrane region" description="Helical" evidence="2">
    <location>
        <begin position="651"/>
        <end position="671"/>
    </location>
</feature>
<feature type="topological domain" description="Extracellular" evidence="2">
    <location>
        <begin position="672"/>
        <end position="840"/>
    </location>
</feature>
<feature type="transmembrane region" description="Helical" evidence="2">
    <location>
        <begin position="841"/>
        <end position="864"/>
    </location>
</feature>
<feature type="topological domain" description="Cytoplasmic" evidence="2">
    <location>
        <begin position="865"/>
        <end position="1323"/>
    </location>
</feature>
<feature type="region of interest" description="Pore-forming" evidence="4">
    <location>
        <begin position="628"/>
        <end position="647"/>
    </location>
</feature>
<feature type="region of interest" description="Disordered" evidence="8">
    <location>
        <begin position="897"/>
        <end position="952"/>
    </location>
</feature>
<feature type="region of interest" description="Disordered" evidence="8">
    <location>
        <begin position="977"/>
        <end position="1112"/>
    </location>
</feature>
<feature type="region of interest" description="Disordered" evidence="8">
    <location>
        <begin position="1201"/>
        <end position="1323"/>
    </location>
</feature>
<feature type="short sequence motif" description="PDZ-binding" evidence="1">
    <location>
        <begin position="1321"/>
        <end position="1323"/>
    </location>
</feature>
<feature type="compositionally biased region" description="Pro residues" evidence="8">
    <location>
        <begin position="899"/>
        <end position="929"/>
    </location>
</feature>
<feature type="compositionally biased region" description="Basic and acidic residues" evidence="8">
    <location>
        <begin position="931"/>
        <end position="940"/>
    </location>
</feature>
<feature type="compositionally biased region" description="Low complexity" evidence="8">
    <location>
        <begin position="977"/>
        <end position="986"/>
    </location>
</feature>
<feature type="compositionally biased region" description="Pro residues" evidence="8">
    <location>
        <begin position="987"/>
        <end position="1001"/>
    </location>
</feature>
<feature type="compositionally biased region" description="Low complexity" evidence="8">
    <location>
        <begin position="1030"/>
        <end position="1039"/>
    </location>
</feature>
<feature type="compositionally biased region" description="Pro residues" evidence="8">
    <location>
        <begin position="1080"/>
        <end position="1092"/>
    </location>
</feature>
<feature type="compositionally biased region" description="Basic residues" evidence="8">
    <location>
        <begin position="1208"/>
        <end position="1228"/>
    </location>
</feature>
<feature type="binding site" evidence="6">
    <location>
        <position position="536"/>
    </location>
    <ligand>
        <name>L-glutamate</name>
        <dbReference type="ChEBI" id="CHEBI:29985"/>
    </ligand>
</feature>
<feature type="binding site" evidence="6">
    <location>
        <position position="538"/>
    </location>
    <ligand>
        <name>L-glutamate</name>
        <dbReference type="ChEBI" id="CHEBI:29985"/>
    </ligand>
</feature>
<feature type="binding site" evidence="6">
    <location>
        <position position="543"/>
    </location>
    <ligand>
        <name>L-glutamate</name>
        <dbReference type="ChEBI" id="CHEBI:29985"/>
    </ligand>
</feature>
<feature type="binding site" evidence="6">
    <location>
        <position position="714"/>
    </location>
    <ligand>
        <name>L-glutamate</name>
        <dbReference type="ChEBI" id="CHEBI:29985"/>
    </ligand>
</feature>
<feature type="binding site" evidence="6">
    <location>
        <position position="715"/>
    </location>
    <ligand>
        <name>L-glutamate</name>
        <dbReference type="ChEBI" id="CHEBI:29985"/>
    </ligand>
</feature>
<feature type="binding site" evidence="6">
    <location>
        <position position="756"/>
    </location>
    <ligand>
        <name>L-glutamate</name>
        <dbReference type="ChEBI" id="CHEBI:29985"/>
    </ligand>
</feature>
<feature type="site" description="Functional determinant of NMDA receptors" evidence="1">
    <location>
        <position position="639"/>
    </location>
</feature>
<feature type="modified residue" description="Omega-N-methylarginine" evidence="18">
    <location>
        <position position="1303"/>
    </location>
</feature>
<feature type="modified residue" description="Phosphoserine" evidence="17">
    <location>
        <position position="1313"/>
    </location>
</feature>
<feature type="glycosylation site" description="N-linked (GlcNAc...) asparagine" evidence="7">
    <location>
        <position position="89"/>
    </location>
</feature>
<feature type="glycosylation site" description="N-linked (GlcNAc...) asparagine" evidence="7">
    <location>
        <position position="349"/>
    </location>
</feature>
<feature type="glycosylation site" description="N-linked (GlcNAc...) asparagine" evidence="7">
    <location>
        <position position="363"/>
    </location>
</feature>
<feature type="glycosylation site" description="N-linked (GlcNAc...) asparagine" evidence="7">
    <location>
        <position position="381"/>
    </location>
</feature>
<feature type="glycosylation site" description="N-linked (GlcNAc...) asparagine" evidence="7">
    <location>
        <position position="464"/>
    </location>
</feature>
<feature type="glycosylation site" description="N-linked (GlcNAc...) asparagine" evidence="7">
    <location>
        <position position="566"/>
    </location>
</feature>
<feature type="glycosylation site" description="N-linked (GlcNAc...) asparagine" evidence="7">
    <location>
        <position position="712"/>
    </location>
</feature>
<feature type="disulfide bond" evidence="2">
    <location>
        <begin position="101"/>
        <end position="345"/>
    </location>
</feature>
<feature type="disulfide bond" evidence="2">
    <location>
        <begin position="452"/>
        <end position="480"/>
    </location>
</feature>
<feature type="disulfide bond" evidence="2">
    <location>
        <begin position="459"/>
        <end position="481"/>
    </location>
</feature>
<feature type="disulfide bond" evidence="2">
    <location>
        <begin position="770"/>
        <end position="825"/>
    </location>
</feature>
<feature type="sequence conflict" description="In Ref. 2; BAA02254." evidence="14" ref="2">
    <original>A</original>
    <variation>T</variation>
    <location>
        <position position="1087"/>
    </location>
</feature>
<feature type="sequence conflict" description="In Ref. 2; BAA02254." evidence="14" ref="2">
    <original>PR</original>
    <variation>AP</variation>
    <location>
        <begin position="1208"/>
        <end position="1209"/>
    </location>
</feature>
<protein>
    <recommendedName>
        <fullName evidence="14">Glutamate receptor ionotropic, NMDA 2D</fullName>
        <shortName evidence="2">GluN2D</shortName>
    </recommendedName>
    <alternativeName>
        <fullName evidence="12 13">Glutamate [NMDA] receptor subunit epsilon-4</fullName>
    </alternativeName>
    <alternativeName>
        <fullName>N-methyl D-aspartate receptor subtype 2D</fullName>
        <shortName evidence="2">NMDAR2D</shortName>
        <shortName>NR2D</shortName>
    </alternativeName>
</protein>
<organism>
    <name type="scientific">Mus musculus</name>
    <name type="common">Mouse</name>
    <dbReference type="NCBI Taxonomy" id="10090"/>
    <lineage>
        <taxon>Eukaryota</taxon>
        <taxon>Metazoa</taxon>
        <taxon>Chordata</taxon>
        <taxon>Craniata</taxon>
        <taxon>Vertebrata</taxon>
        <taxon>Euteleostomi</taxon>
        <taxon>Mammalia</taxon>
        <taxon>Eutheria</taxon>
        <taxon>Euarchontoglires</taxon>
        <taxon>Glires</taxon>
        <taxon>Rodentia</taxon>
        <taxon>Myomorpha</taxon>
        <taxon>Muroidea</taxon>
        <taxon>Muridae</taxon>
        <taxon>Murinae</taxon>
        <taxon>Mus</taxon>
        <taxon>Mus</taxon>
    </lineage>
</organism>
<sequence>MRGAGGPRGPRGPAKMLLLLALACASPFPEEVPGPGAAGGGTGGARPLNVALVFSGPAYAAEAARLGPAVAAAVRSPGLDVRPVALVLNGSDPRSLVLQLCDLLSGLRVHGVVFEDDSRAPAVAPILDFLSAQTSLPIVAVHGGAALVLTPKEKGSTFLQLGSSTEQQLQVIFEVLEEYDWTSFVAVTTRAPGHRAFLSYIEVLTDGSLVGWEHRGALTLDPGAGEAVLGAQLRSVSAQIRLLFCAREEAEPVFRAAEEAGLTGPGYVWFMVGPQLAGGGGSGVPGEPLLLPGGAPLPAGLFAVRSAGWRDDLARRVAAGVAVVARGAQALLRDYGFLPELGHDCRAQNRTHRGESLHRYFMNITWDNRDYSFNEDGFLVNPSLVVISLTRDRTWEVVGSWEQQTLRLKYPLWSRYGRFLQPVDDTQHLTVATLEERPFVIVEPADPISGTCIRDSVPCRSQLNRTHSPPPDAPRPEKRCCKGFCIDILKRLAHTIGFSYDLYLVTNGKHGKKIDGVWNGMIGEVFYQRADMAIGSLTINEERSEIVDFSVPFVETGISVMVARSNGTVSPSAFLEPYSPAVWVMMFVMCLTVVAVTVFIFEYLSPVGYNRSLATGKRPGGSTFTIGKSIWLLWALVFNNSVPVENPRGTTSKIMVLVWAFFAVIFLASYTANLAAFMIQEEYVDTVSGLSDRKFQRPQEQYPPLKFGTVPNGSTEKNIRSNYPDMHSYMVRYNQPRVEEALTQLKAGKLDAFIYDAAVLNYMARKDEGCKLVTIGSGKVFATTGYGIALHKGSRWKRPIDLALLQFLGDDEIEMLERLWLSGICHNDKIEVMSSKLDIDNMAGVFYMLLVAMGLSLLVFAWEHLVYWRLRHCLGPTHRMDFLLAFSRGMYSCCSAEAAPPPAKPPPPPQPLPSPAYPAARPPPGPAPFVPRERAAADRWRRAKGTGPPGGAALADGFHRYYGPIEPQGLGLGEARAAPRGAAGRPLSPPTTQPPQKPPPSYFAIVREQEPAEPPAGAFPGFPSPPAPPAAAAAAVGPPLCRLAFEDESPPAPSRWPRSDPESQPLLGGGAGGPSAGAPTAPPPRRAAPPPCAYLDLEPSPSDSEDSESLGGASLGGLEPWWFADFPYPYAERLGPPPGRYWSVDKLGGWRAGSWDYLPPRGGPAWHCRHCASLELLPPPRHLSCSHDGLDGGWWAPPPPPWAAGPPPRRRARCGCPRPHPHRPRASHRAPAAAPHHHRHRRAAGGWDLPPPAPTSRSLEDLSSCPRAAPTRRLTGPSRHARRCPHAAHWGPPLPTASHRRHRGGDLGTRRGSAHFSSLESEV</sequence>
<name>NMDE4_MOUSE</name>
<proteinExistence type="evidence at protein level"/>
<dbReference type="EMBL" id="AB154245">
    <property type="protein sequence ID" value="BAI44630.1"/>
    <property type="molecule type" value="mRNA"/>
</dbReference>
<dbReference type="EMBL" id="D12822">
    <property type="protein sequence ID" value="BAA02254.1"/>
    <property type="molecule type" value="mRNA"/>
</dbReference>
<dbReference type="CCDS" id="CCDS21267.1"/>
<dbReference type="PIR" id="S27224">
    <property type="entry name" value="S27224"/>
</dbReference>
<dbReference type="RefSeq" id="NP_032198.2">
    <property type="nucleotide sequence ID" value="NM_008172.3"/>
</dbReference>
<dbReference type="RefSeq" id="XP_011249107.1">
    <property type="nucleotide sequence ID" value="XM_011250805.2"/>
</dbReference>
<dbReference type="RefSeq" id="XP_030098011.1">
    <property type="nucleotide sequence ID" value="XM_030242151.2"/>
</dbReference>
<dbReference type="SMR" id="Q03391"/>
<dbReference type="BioGRID" id="200071">
    <property type="interactions" value="6"/>
</dbReference>
<dbReference type="ComplexPortal" id="CPX-293">
    <property type="entry name" value="NMDA receptor complex, GluN1-GluN2D"/>
</dbReference>
<dbReference type="FunCoup" id="Q03391">
    <property type="interactions" value="776"/>
</dbReference>
<dbReference type="IntAct" id="Q03391">
    <property type="interactions" value="3"/>
</dbReference>
<dbReference type="STRING" id="10090.ENSMUSP00000002848"/>
<dbReference type="ChEMBL" id="CHEMBL3832634"/>
<dbReference type="GlyConnect" id="2353">
    <property type="glycosylation" value="1 N-Linked glycan (1 site)"/>
</dbReference>
<dbReference type="GlyCosmos" id="Q03391">
    <property type="glycosylation" value="7 sites, 1 glycan"/>
</dbReference>
<dbReference type="GlyGen" id="Q03391">
    <property type="glycosylation" value="9 sites, 4 N-linked glycans (3 sites)"/>
</dbReference>
<dbReference type="iPTMnet" id="Q03391"/>
<dbReference type="PhosphoSitePlus" id="Q03391"/>
<dbReference type="PaxDb" id="10090-ENSMUSP00000002848"/>
<dbReference type="PeptideAtlas" id="Q03391"/>
<dbReference type="ProteomicsDB" id="252912"/>
<dbReference type="Antibodypedia" id="31709">
    <property type="antibodies" value="185 antibodies from 29 providers"/>
</dbReference>
<dbReference type="DNASU" id="14814"/>
<dbReference type="Ensembl" id="ENSMUST00000002848.10">
    <property type="protein sequence ID" value="ENSMUSP00000002848.8"/>
    <property type="gene ID" value="ENSMUSG00000002771.13"/>
</dbReference>
<dbReference type="Ensembl" id="ENSMUST00000211713.2">
    <property type="protein sequence ID" value="ENSMUSP00000147663.2"/>
    <property type="gene ID" value="ENSMUSG00000002771.13"/>
</dbReference>
<dbReference type="GeneID" id="14814"/>
<dbReference type="KEGG" id="mmu:14814"/>
<dbReference type="UCSC" id="uc009gxm.1">
    <property type="organism name" value="mouse"/>
</dbReference>
<dbReference type="AGR" id="MGI:95823"/>
<dbReference type="CTD" id="2906"/>
<dbReference type="MGI" id="MGI:95823">
    <property type="gene designation" value="Grin2d"/>
</dbReference>
<dbReference type="VEuPathDB" id="HostDB:ENSMUSG00000002771"/>
<dbReference type="eggNOG" id="KOG1053">
    <property type="taxonomic scope" value="Eukaryota"/>
</dbReference>
<dbReference type="GeneTree" id="ENSGT00940000159109"/>
<dbReference type="HOGENOM" id="CLU_002039_3_1_1"/>
<dbReference type="InParanoid" id="Q03391"/>
<dbReference type="OMA" id="DRWRRPK"/>
<dbReference type="OrthoDB" id="5984008at2759"/>
<dbReference type="PhylomeDB" id="Q03391"/>
<dbReference type="TreeFam" id="TF314731"/>
<dbReference type="Reactome" id="R-MMU-438066">
    <property type="pathway name" value="Unblocking of NMDA receptors, glutamate binding and activation"/>
</dbReference>
<dbReference type="Reactome" id="R-MMU-5673001">
    <property type="pathway name" value="RAF/MAP kinase cascade"/>
</dbReference>
<dbReference type="Reactome" id="R-MMU-8849932">
    <property type="pathway name" value="Synaptic adhesion-like molecules"/>
</dbReference>
<dbReference type="Reactome" id="R-MMU-9609736">
    <property type="pathway name" value="Assembly and cell surface presentation of NMDA receptors"/>
</dbReference>
<dbReference type="BioGRID-ORCS" id="14814">
    <property type="hits" value="2 hits in 80 CRISPR screens"/>
</dbReference>
<dbReference type="CD-CODE" id="CE726F99">
    <property type="entry name" value="Postsynaptic density"/>
</dbReference>
<dbReference type="ChiTaRS" id="Grin2d">
    <property type="organism name" value="mouse"/>
</dbReference>
<dbReference type="PRO" id="PR:Q03391"/>
<dbReference type="Proteomes" id="UP000000589">
    <property type="component" value="Chromosome 7"/>
</dbReference>
<dbReference type="RNAct" id="Q03391">
    <property type="molecule type" value="protein"/>
</dbReference>
<dbReference type="Bgee" id="ENSMUSG00000002771">
    <property type="expression patterns" value="Expressed in molecular layer of cerebellar cortex and 85 other cell types or tissues"/>
</dbReference>
<dbReference type="ExpressionAtlas" id="Q03391">
    <property type="expression patterns" value="baseline and differential"/>
</dbReference>
<dbReference type="GO" id="GO:0098978">
    <property type="term" value="C:glutamatergic synapse"/>
    <property type="evidence" value="ECO:0007669"/>
    <property type="project" value="Ensembl"/>
</dbReference>
<dbReference type="GO" id="GO:0098686">
    <property type="term" value="C:hippocampal mossy fiber to CA3 synapse"/>
    <property type="evidence" value="ECO:0007669"/>
    <property type="project" value="Ensembl"/>
</dbReference>
<dbReference type="GO" id="GO:0017146">
    <property type="term" value="C:NMDA selective glutamate receptor complex"/>
    <property type="evidence" value="ECO:0000250"/>
    <property type="project" value="UniProtKB"/>
</dbReference>
<dbReference type="GO" id="GO:0005886">
    <property type="term" value="C:plasma membrane"/>
    <property type="evidence" value="ECO:0000250"/>
    <property type="project" value="UniProtKB"/>
</dbReference>
<dbReference type="GO" id="GO:0098839">
    <property type="term" value="C:postsynaptic density membrane"/>
    <property type="evidence" value="ECO:0007669"/>
    <property type="project" value="Ensembl"/>
</dbReference>
<dbReference type="GO" id="GO:0045211">
    <property type="term" value="C:postsynaptic membrane"/>
    <property type="evidence" value="ECO:0000250"/>
    <property type="project" value="UniProtKB"/>
</dbReference>
<dbReference type="GO" id="GO:0048787">
    <property type="term" value="C:presynaptic active zone membrane"/>
    <property type="evidence" value="ECO:0007669"/>
    <property type="project" value="Ensembl"/>
</dbReference>
<dbReference type="GO" id="GO:0045202">
    <property type="term" value="C:synapse"/>
    <property type="evidence" value="ECO:0000314"/>
    <property type="project" value="MGI"/>
</dbReference>
<dbReference type="GO" id="GO:0016595">
    <property type="term" value="F:glutamate binding"/>
    <property type="evidence" value="ECO:0007669"/>
    <property type="project" value="Ensembl"/>
</dbReference>
<dbReference type="GO" id="GO:0022849">
    <property type="term" value="F:glutamate-gated calcium ion channel activity"/>
    <property type="evidence" value="ECO:0000250"/>
    <property type="project" value="UniProtKB"/>
</dbReference>
<dbReference type="GO" id="GO:0099507">
    <property type="term" value="F:ligand-gated monoatomic ion channel activity involved in regulation of presynaptic membrane potential"/>
    <property type="evidence" value="ECO:0007669"/>
    <property type="project" value="Ensembl"/>
</dbReference>
<dbReference type="GO" id="GO:0004972">
    <property type="term" value="F:NMDA glutamate receptor activity"/>
    <property type="evidence" value="ECO:0000314"/>
    <property type="project" value="MGI"/>
</dbReference>
<dbReference type="GO" id="GO:1904315">
    <property type="term" value="F:transmitter-gated monoatomic ion channel activity involved in regulation of postsynaptic membrane potential"/>
    <property type="evidence" value="ECO:0007669"/>
    <property type="project" value="Ensembl"/>
</dbReference>
<dbReference type="GO" id="GO:0022843">
    <property type="term" value="F:voltage-gated monoatomic cation channel activity"/>
    <property type="evidence" value="ECO:0007669"/>
    <property type="project" value="Ensembl"/>
</dbReference>
<dbReference type="GO" id="GO:0008344">
    <property type="term" value="P:adult locomotory behavior"/>
    <property type="evidence" value="ECO:0000315"/>
    <property type="project" value="MGI"/>
</dbReference>
<dbReference type="GO" id="GO:0097553">
    <property type="term" value="P:calcium ion transmembrane import into cytosol"/>
    <property type="evidence" value="ECO:0000250"/>
    <property type="project" value="UniProtKB"/>
</dbReference>
<dbReference type="GO" id="GO:1905232">
    <property type="term" value="P:cellular response to L-glutamate"/>
    <property type="evidence" value="ECO:0007669"/>
    <property type="project" value="Ensembl"/>
</dbReference>
<dbReference type="GO" id="GO:0035235">
    <property type="term" value="P:ionotropic glutamate receptor signaling pathway"/>
    <property type="evidence" value="ECO:0000266"/>
    <property type="project" value="ComplexPortal"/>
</dbReference>
<dbReference type="GO" id="GO:0098655">
    <property type="term" value="P:monoatomic cation transmembrane transport"/>
    <property type="evidence" value="ECO:0000266"/>
    <property type="project" value="ComplexPortal"/>
</dbReference>
<dbReference type="GO" id="GO:2000463">
    <property type="term" value="P:positive regulation of excitatory postsynaptic potential"/>
    <property type="evidence" value="ECO:0000266"/>
    <property type="project" value="ComplexPortal"/>
</dbReference>
<dbReference type="GO" id="GO:0051968">
    <property type="term" value="P:positive regulation of synaptic transmission, glutamatergic"/>
    <property type="evidence" value="ECO:0000266"/>
    <property type="project" value="ComplexPortal"/>
</dbReference>
<dbReference type="GO" id="GO:1904062">
    <property type="term" value="P:regulation of monoatomic cation transmembrane transport"/>
    <property type="evidence" value="ECO:0000266"/>
    <property type="project" value="ComplexPortal"/>
</dbReference>
<dbReference type="GO" id="GO:0048168">
    <property type="term" value="P:regulation of neuronal synaptic plasticity"/>
    <property type="evidence" value="ECO:0000303"/>
    <property type="project" value="ComplexPortal"/>
</dbReference>
<dbReference type="GO" id="GO:0051930">
    <property type="term" value="P:regulation of sensory perception of pain"/>
    <property type="evidence" value="ECO:0000315"/>
    <property type="project" value="MGI"/>
</dbReference>
<dbReference type="GO" id="GO:0048167">
    <property type="term" value="P:regulation of synaptic plasticity"/>
    <property type="evidence" value="ECO:0000314"/>
    <property type="project" value="UniProtKB"/>
</dbReference>
<dbReference type="GO" id="GO:0001964">
    <property type="term" value="P:startle response"/>
    <property type="evidence" value="ECO:0000315"/>
    <property type="project" value="MGI"/>
</dbReference>
<dbReference type="GO" id="GO:0035249">
    <property type="term" value="P:synaptic transmission, glutamatergic"/>
    <property type="evidence" value="ECO:0007669"/>
    <property type="project" value="Ensembl"/>
</dbReference>
<dbReference type="CDD" id="cd06378">
    <property type="entry name" value="PBP1_iGluR_NMDA_NR2"/>
    <property type="match status" value="1"/>
</dbReference>
<dbReference type="CDD" id="cd13718">
    <property type="entry name" value="PBP2_iGluR_NMDA_Nr2"/>
    <property type="match status" value="1"/>
</dbReference>
<dbReference type="FunFam" id="3.40.50.2300:FF:000626">
    <property type="entry name" value="Glutamate ionotropic receptor NMDA type subunit 2D"/>
    <property type="match status" value="1"/>
</dbReference>
<dbReference type="FunFam" id="3.40.190.10:FF:000397">
    <property type="entry name" value="Glutamate receptor ionotropic, NMDA 2D"/>
    <property type="match status" value="1"/>
</dbReference>
<dbReference type="FunFam" id="3.40.190.10:FF:000007">
    <property type="entry name" value="Putative glutamate receptor ionotropic NMDA 2B"/>
    <property type="match status" value="1"/>
</dbReference>
<dbReference type="Gene3D" id="3.40.50.2300">
    <property type="match status" value="2"/>
</dbReference>
<dbReference type="Gene3D" id="3.40.190.10">
    <property type="entry name" value="Periplasmic binding protein-like II"/>
    <property type="match status" value="2"/>
</dbReference>
<dbReference type="InterPro" id="IPR001828">
    <property type="entry name" value="ANF_lig-bd_rcpt"/>
</dbReference>
<dbReference type="InterPro" id="IPR019594">
    <property type="entry name" value="Glu/Gly-bd"/>
</dbReference>
<dbReference type="InterPro" id="IPR001508">
    <property type="entry name" value="Iono_Glu_rcpt_met"/>
</dbReference>
<dbReference type="InterPro" id="IPR015683">
    <property type="entry name" value="Ionotropic_Glu_rcpt"/>
</dbReference>
<dbReference type="InterPro" id="IPR001320">
    <property type="entry name" value="Iontro_rcpt_C"/>
</dbReference>
<dbReference type="InterPro" id="IPR028082">
    <property type="entry name" value="Peripla_BP_I"/>
</dbReference>
<dbReference type="PANTHER" id="PTHR18966">
    <property type="entry name" value="IONOTROPIC GLUTAMATE RECEPTOR"/>
    <property type="match status" value="1"/>
</dbReference>
<dbReference type="Pfam" id="PF01094">
    <property type="entry name" value="ANF_receptor"/>
    <property type="match status" value="1"/>
</dbReference>
<dbReference type="Pfam" id="PF00060">
    <property type="entry name" value="Lig_chan"/>
    <property type="match status" value="1"/>
</dbReference>
<dbReference type="Pfam" id="PF10613">
    <property type="entry name" value="Lig_chan-Glu_bd"/>
    <property type="match status" value="1"/>
</dbReference>
<dbReference type="PRINTS" id="PR00177">
    <property type="entry name" value="NMDARECEPTOR"/>
</dbReference>
<dbReference type="SMART" id="SM00918">
    <property type="entry name" value="Lig_chan-Glu_bd"/>
    <property type="match status" value="1"/>
</dbReference>
<dbReference type="SMART" id="SM00079">
    <property type="entry name" value="PBPe"/>
    <property type="match status" value="1"/>
</dbReference>
<dbReference type="SUPFAM" id="SSF53822">
    <property type="entry name" value="Periplasmic binding protein-like I"/>
    <property type="match status" value="1"/>
</dbReference>
<dbReference type="SUPFAM" id="SSF53850">
    <property type="entry name" value="Periplasmic binding protein-like II"/>
    <property type="match status" value="1"/>
</dbReference>
<gene>
    <name evidence="16" type="primary">Grin2d</name>
    <name evidence="2" type="synonym">GluN2D</name>
</gene>
<accession>Q03391</accession>
<accession>C9K0Z5</accession>
<comment type="function">
    <text evidence="3 5 6 9 10">Component of N-methyl-D-aspartate (NMDA) receptors (NMDARs) that function as heterotetrameric, ligand-gated cation channels with high calcium permeability and voltage-dependent block by Mg(2+) (PubMed:1385220). Participates in synaptic plasticity for learning and memory formation (By similarity). Channel activation requires binding of the neurotransmitter L-glutamate to the GluN2 subunit, glycine or D-serine binding to the GluN1 subunit, plus membrane depolarization to eliminate channel inhibition by Mg(2+) (PubMed:1385220, PubMed:7790891). NMDARs mediate simultaneously the potasium efflux and the influx of calcium and sodium (By similarity). Each GluN2 subunit confers differential attributes to channel properties, including activation, deactivation and desensitization kinetics, pH sensitivity, Ca2(+) permeability, and binding to allosteric modulators (By similarity).</text>
</comment>
<comment type="catalytic activity">
    <reaction evidence="9">
        <text>Ca(2+)(in) = Ca(2+)(out)</text>
        <dbReference type="Rhea" id="RHEA:29671"/>
        <dbReference type="ChEBI" id="CHEBI:29108"/>
    </reaction>
</comment>
<comment type="catalytic activity">
    <reaction evidence="6">
        <text>Na(+)(in) = Na(+)(out)</text>
        <dbReference type="Rhea" id="RHEA:34963"/>
        <dbReference type="ChEBI" id="CHEBI:29101"/>
    </reaction>
</comment>
<comment type="catalytic activity">
    <reaction evidence="3">
        <text>K(+)(in) = K(+)(out)</text>
        <dbReference type="Rhea" id="RHEA:29463"/>
        <dbReference type="ChEBI" id="CHEBI:29103"/>
    </reaction>
</comment>
<comment type="subunit">
    <text evidence="6 9 14">Heterotetramer. Forms heterotetrameric channels composed of two GluN1/zeta subunits (GRIN1), and two identical GluN2/epsilon subunits (GRIN2A, GRIN2B, GRIN2C or GRIN2D) or GluN3 subunits (GRIN3A or GRIN3B) (in vitro) (PubMed:1385220). In vivo, the subunit composition may depend on the expression levels of the different subunits (Probable). Interacts with PDZ domains of PATJ and DLG4 (By similarity).</text>
</comment>
<comment type="subcellular location">
    <subcellularLocation>
        <location evidence="9">Cell membrane</location>
        <topology evidence="14">Multi-pass membrane protein</topology>
    </subcellularLocation>
    <subcellularLocation>
        <location evidence="15">Postsynaptic cell membrane</location>
        <topology evidence="14">Multi-pass membrane protein</topology>
    </subcellularLocation>
</comment>
<comment type="tissue specificity">
    <text evidence="11">Detected in neonate brain synaptosomes (at protein level).</text>
</comment>
<comment type="domain">
    <text evidence="4">A hydrophobic region that gives rise to the prediction of a transmembrane span does not cross the membrane, but is part of a discontinuously helical region that dips into the membrane and is probably part of the pore and of the selectivity filter.</text>
</comment>
<comment type="disruption phenotype">
    <text evidence="11">Mice are born at the expected Mendelian rate, are viable and fertile. Their brains appear grossly normal. Mutant mice show reduced spontaneous locomotion activity, but have no visible impairment of motor skills. They have normal exploratory behavior, but their behavior in a new situation suggests increased novelty preference.</text>
</comment>
<comment type="similarity">
    <text evidence="14">Belongs to the glutamate-gated ion channel (TC 1.A.10.1) family. NR2D/GRIN2D subfamily.</text>
</comment>
<evidence type="ECO:0000250" key="1"/>
<evidence type="ECO:0000250" key="2">
    <source>
        <dbReference type="UniProtKB" id="O15399"/>
    </source>
</evidence>
<evidence type="ECO:0000250" key="3">
    <source>
        <dbReference type="UniProtKB" id="P35438"/>
    </source>
</evidence>
<evidence type="ECO:0000250" key="4">
    <source>
        <dbReference type="UniProtKB" id="Q00960"/>
    </source>
</evidence>
<evidence type="ECO:0000250" key="5">
    <source>
        <dbReference type="UniProtKB" id="Q14957"/>
    </source>
</evidence>
<evidence type="ECO:0000250" key="6">
    <source>
        <dbReference type="UniProtKB" id="Q62645"/>
    </source>
</evidence>
<evidence type="ECO:0000255" key="7"/>
<evidence type="ECO:0000256" key="8">
    <source>
        <dbReference type="SAM" id="MobiDB-lite"/>
    </source>
</evidence>
<evidence type="ECO:0000269" key="9">
    <source>
    </source>
</evidence>
<evidence type="ECO:0000269" key="10">
    <source>
    </source>
</evidence>
<evidence type="ECO:0000269" key="11">
    <source>
    </source>
</evidence>
<evidence type="ECO:0000303" key="12">
    <source>
    </source>
</evidence>
<evidence type="ECO:0000303" key="13">
    <source>
    </source>
</evidence>
<evidence type="ECO:0000305" key="14"/>
<evidence type="ECO:0000305" key="15">
    <source>
    </source>
</evidence>
<evidence type="ECO:0000312" key="16">
    <source>
        <dbReference type="MGI" id="MGI:95823"/>
    </source>
</evidence>
<evidence type="ECO:0007744" key="17">
    <source>
    </source>
</evidence>
<evidence type="ECO:0007744" key="18">
    <source>
    </source>
</evidence>
<keyword id="KW-0106">Calcium</keyword>
<keyword id="KW-1003">Cell membrane</keyword>
<keyword id="KW-1015">Disulfide bond</keyword>
<keyword id="KW-0325">Glycoprotein</keyword>
<keyword id="KW-0407">Ion channel</keyword>
<keyword id="KW-0406">Ion transport</keyword>
<keyword id="KW-1071">Ligand-gated ion channel</keyword>
<keyword id="KW-0460">Magnesium</keyword>
<keyword id="KW-0472">Membrane</keyword>
<keyword id="KW-0488">Methylation</keyword>
<keyword id="KW-0597">Phosphoprotein</keyword>
<keyword id="KW-0628">Postsynaptic cell membrane</keyword>
<keyword id="KW-0675">Receptor</keyword>
<keyword id="KW-1185">Reference proteome</keyword>
<keyword id="KW-0732">Signal</keyword>
<keyword id="KW-0770">Synapse</keyword>
<keyword id="KW-0812">Transmembrane</keyword>
<keyword id="KW-1133">Transmembrane helix</keyword>
<keyword id="KW-0813">Transport</keyword>
<reference key="1">
    <citation type="submission" date="2009-10" db="EMBL/GenBank/DDBJ databases">
        <title>Expression of mRNA in mouse spinal cord.</title>
        <authorList>
            <person name="Nishizwa M."/>
            <person name="Ito S."/>
        </authorList>
    </citation>
    <scope>NUCLEOTIDE SEQUENCE [MRNA]</scope>
    <source>
        <strain>ddY</strain>
        <tissue>Spinal cord</tissue>
    </source>
</reference>
<reference key="2">
    <citation type="journal article" date="1992" name="FEBS Lett.">
        <title>Cloning and expression of the epsilon 4 subunit of the NMDA receptor channel.</title>
        <authorList>
            <person name="Ikeda K."/>
            <person name="Nagasawa M."/>
            <person name="Mori H."/>
            <person name="Araki K."/>
            <person name="Sakimura K."/>
            <person name="Watanabe M."/>
            <person name="Inoue Y."/>
            <person name="Mishina M."/>
        </authorList>
    </citation>
    <scope>NUCLEOTIDE SEQUENCE [MRNA]</scope>
    <scope>FUNCTION</scope>
    <scope>TRANSPORTER ACTIVITY</scope>
    <scope>SUBCELLULAR LOCATION</scope>
    <scope>SUBUNIT</scope>
    <source>
        <tissue>Brain</tissue>
    </source>
</reference>
<reference key="3">
    <citation type="submission" date="1998-05" db="EMBL/GenBank/DDBJ databases">
        <authorList>
            <person name="Ikeda K."/>
            <person name="Nagasawa M."/>
            <person name="Mori H."/>
            <person name="Araki K."/>
            <person name="Sakimura K."/>
            <person name="Watanabe M."/>
            <person name="Inoue Y."/>
            <person name="Mishina M."/>
        </authorList>
    </citation>
    <scope>SEQUENCE REVISION</scope>
</reference>
<reference key="4">
    <citation type="journal article" date="1995" name="Brain Res. Mol. Brain Res.">
        <title>Reduced spontaneous activity of mice defective in the epsilon 4 subunit of the NMDA receptor channel.</title>
        <authorList>
            <person name="Ikeda K."/>
            <person name="Araki K."/>
            <person name="Takayama C."/>
            <person name="Inoue Y."/>
            <person name="Yagi T."/>
            <person name="Aizawa S."/>
            <person name="Mishina M."/>
        </authorList>
    </citation>
    <scope>DISRUPTION PHENOTYPE</scope>
    <scope>SUBCELLULAR LOCATION</scope>
    <scope>TISSUE SPECIFICITY</scope>
</reference>
<reference key="5">
    <citation type="journal article" date="1995" name="J. Neurochem.">
        <title>Functional comparison of D-serine and glycine in rodents: the effect on cloned NMDA receptors and the extracellular concentration.</title>
        <authorList>
            <person name="Matsui T."/>
            <person name="Sekiguchi M."/>
            <person name="Hashimoto A."/>
            <person name="Tomita U."/>
            <person name="Nishikawa T."/>
            <person name="Wada K."/>
        </authorList>
    </citation>
    <scope>FUNCTION</scope>
</reference>
<reference key="6">
    <citation type="journal article" date="2010" name="Cell">
        <title>A tissue-specific atlas of mouse protein phosphorylation and expression.</title>
        <authorList>
            <person name="Huttlin E.L."/>
            <person name="Jedrychowski M.P."/>
            <person name="Elias J.E."/>
            <person name="Goswami T."/>
            <person name="Rad R."/>
            <person name="Beausoleil S.A."/>
            <person name="Villen J."/>
            <person name="Haas W."/>
            <person name="Sowa M.E."/>
            <person name="Gygi S.P."/>
        </authorList>
    </citation>
    <scope>PHOSPHORYLATION [LARGE SCALE ANALYSIS] AT SER-1313</scope>
    <scope>IDENTIFICATION BY MASS SPECTROMETRY [LARGE SCALE ANALYSIS]</scope>
    <source>
        <tissue>Brain</tissue>
    </source>
</reference>
<reference key="7">
    <citation type="journal article" date="2014" name="Mol. Cell. Proteomics">
        <title>Immunoaffinity enrichment and mass spectrometry analysis of protein methylation.</title>
        <authorList>
            <person name="Guo A."/>
            <person name="Gu H."/>
            <person name="Zhou J."/>
            <person name="Mulhern D."/>
            <person name="Wang Y."/>
            <person name="Lee K.A."/>
            <person name="Yang V."/>
            <person name="Aguiar M."/>
            <person name="Kornhauser J."/>
            <person name="Jia X."/>
            <person name="Ren J."/>
            <person name="Beausoleil S.A."/>
            <person name="Silva J.C."/>
            <person name="Vemulapalli V."/>
            <person name="Bedford M.T."/>
            <person name="Comb M.J."/>
        </authorList>
    </citation>
    <scope>METHYLATION [LARGE SCALE ANALYSIS] AT ARG-1303</scope>
    <scope>IDENTIFICATION BY MASS SPECTROMETRY [LARGE SCALE ANALYSIS]</scope>
    <source>
        <tissue>Brain</tissue>
    </source>
</reference>